<sequence>MSKPRKPKGRPISGWLILDKPMDFGSTEAVSKLKWLYKAQKAGHAGTLDPLASGMLPIALGDATKTVPYVMDGRKIYEFTVSWGEERATDDLEGDVTQSSERRPTEQQIRDILPRYIGTISQVPPQFSAIKIAGERAYDLARDGEAVEIPSREVEIFRLTLLGCRDANTAHFEVECGKGTYVRALARDFGRELGCYGHISGLRRTFVAPFSEDAMVPLANLVALEAIEDMDERLAALDALLIDTCEALSALPHLVINDDQAHRLKMGNPILVRGRDAPIAESEAYATARGRLIAIGEIGQGEFRPKRVFA</sequence>
<keyword id="KW-0413">Isomerase</keyword>
<keyword id="KW-1185">Reference proteome</keyword>
<keyword id="KW-0819">tRNA processing</keyword>
<feature type="chain" id="PRO_1000084654" description="tRNA pseudouridine synthase B">
    <location>
        <begin position="1"/>
        <end position="310"/>
    </location>
</feature>
<feature type="active site" description="Nucleophile" evidence="1">
    <location>
        <position position="49"/>
    </location>
</feature>
<proteinExistence type="inferred from homology"/>
<dbReference type="EC" id="5.4.99.25" evidence="1"/>
<dbReference type="EMBL" id="CP000133">
    <property type="protein sequence ID" value="ABC88939.1"/>
    <property type="molecule type" value="Genomic_DNA"/>
</dbReference>
<dbReference type="RefSeq" id="WP_011423509.1">
    <property type="nucleotide sequence ID" value="NC_007761.1"/>
</dbReference>
<dbReference type="SMR" id="Q2KDZ7"/>
<dbReference type="KEGG" id="ret:RHE_CH00114"/>
<dbReference type="eggNOG" id="COG0130">
    <property type="taxonomic scope" value="Bacteria"/>
</dbReference>
<dbReference type="HOGENOM" id="CLU_032087_0_3_5"/>
<dbReference type="OrthoDB" id="9802309at2"/>
<dbReference type="Proteomes" id="UP000001936">
    <property type="component" value="Chromosome"/>
</dbReference>
<dbReference type="GO" id="GO:0003723">
    <property type="term" value="F:RNA binding"/>
    <property type="evidence" value="ECO:0007669"/>
    <property type="project" value="InterPro"/>
</dbReference>
<dbReference type="GO" id="GO:0160148">
    <property type="term" value="F:tRNA pseudouridine(55) synthase activity"/>
    <property type="evidence" value="ECO:0007669"/>
    <property type="project" value="UniProtKB-EC"/>
</dbReference>
<dbReference type="GO" id="GO:1990481">
    <property type="term" value="P:mRNA pseudouridine synthesis"/>
    <property type="evidence" value="ECO:0007669"/>
    <property type="project" value="TreeGrafter"/>
</dbReference>
<dbReference type="GO" id="GO:0031119">
    <property type="term" value="P:tRNA pseudouridine synthesis"/>
    <property type="evidence" value="ECO:0007669"/>
    <property type="project" value="UniProtKB-UniRule"/>
</dbReference>
<dbReference type="CDD" id="cd02573">
    <property type="entry name" value="PseudoU_synth_EcTruB"/>
    <property type="match status" value="1"/>
</dbReference>
<dbReference type="Gene3D" id="3.30.2350.10">
    <property type="entry name" value="Pseudouridine synthase"/>
    <property type="match status" value="1"/>
</dbReference>
<dbReference type="HAMAP" id="MF_01080">
    <property type="entry name" value="TruB_bact"/>
    <property type="match status" value="1"/>
</dbReference>
<dbReference type="InterPro" id="IPR020103">
    <property type="entry name" value="PsdUridine_synth_cat_dom_sf"/>
</dbReference>
<dbReference type="InterPro" id="IPR002501">
    <property type="entry name" value="PsdUridine_synth_N"/>
</dbReference>
<dbReference type="InterPro" id="IPR014780">
    <property type="entry name" value="tRNA_psdUridine_synth_TruB"/>
</dbReference>
<dbReference type="InterPro" id="IPR032819">
    <property type="entry name" value="TruB_C"/>
</dbReference>
<dbReference type="NCBIfam" id="TIGR00431">
    <property type="entry name" value="TruB"/>
    <property type="match status" value="1"/>
</dbReference>
<dbReference type="PANTHER" id="PTHR13767:SF2">
    <property type="entry name" value="PSEUDOURIDYLATE SYNTHASE TRUB1"/>
    <property type="match status" value="1"/>
</dbReference>
<dbReference type="PANTHER" id="PTHR13767">
    <property type="entry name" value="TRNA-PSEUDOURIDINE SYNTHASE"/>
    <property type="match status" value="1"/>
</dbReference>
<dbReference type="Pfam" id="PF16198">
    <property type="entry name" value="TruB_C_2"/>
    <property type="match status" value="1"/>
</dbReference>
<dbReference type="Pfam" id="PF01509">
    <property type="entry name" value="TruB_N"/>
    <property type="match status" value="1"/>
</dbReference>
<dbReference type="SUPFAM" id="SSF55120">
    <property type="entry name" value="Pseudouridine synthase"/>
    <property type="match status" value="1"/>
</dbReference>
<reference key="1">
    <citation type="journal article" date="2006" name="Proc. Natl. Acad. Sci. U.S.A.">
        <title>The partitioned Rhizobium etli genome: genetic and metabolic redundancy in seven interacting replicons.</title>
        <authorList>
            <person name="Gonzalez V."/>
            <person name="Santamaria R.I."/>
            <person name="Bustos P."/>
            <person name="Hernandez-Gonzalez I."/>
            <person name="Medrano-Soto A."/>
            <person name="Moreno-Hagelsieb G."/>
            <person name="Janga S.C."/>
            <person name="Ramirez M.A."/>
            <person name="Jimenez-Jacinto V."/>
            <person name="Collado-Vides J."/>
            <person name="Davila G."/>
        </authorList>
    </citation>
    <scope>NUCLEOTIDE SEQUENCE [LARGE SCALE GENOMIC DNA]</scope>
    <source>
        <strain>ATCC 51251 / DSM 11541 / JCM 21823 / NBRC 15573 / CFN 42</strain>
    </source>
</reference>
<name>TRUB_RHIEC</name>
<gene>
    <name evidence="1" type="primary">truB</name>
    <name type="ordered locus">RHE_CH00114</name>
</gene>
<organism>
    <name type="scientific">Rhizobium etli (strain ATCC 51251 / DSM 11541 / JCM 21823 / NBRC 15573 / CFN 42)</name>
    <dbReference type="NCBI Taxonomy" id="347834"/>
    <lineage>
        <taxon>Bacteria</taxon>
        <taxon>Pseudomonadati</taxon>
        <taxon>Pseudomonadota</taxon>
        <taxon>Alphaproteobacteria</taxon>
        <taxon>Hyphomicrobiales</taxon>
        <taxon>Rhizobiaceae</taxon>
        <taxon>Rhizobium/Agrobacterium group</taxon>
        <taxon>Rhizobium</taxon>
    </lineage>
</organism>
<comment type="function">
    <text evidence="1">Responsible for synthesis of pseudouridine from uracil-55 in the psi GC loop of transfer RNAs.</text>
</comment>
<comment type="catalytic activity">
    <reaction evidence="1">
        <text>uridine(55) in tRNA = pseudouridine(55) in tRNA</text>
        <dbReference type="Rhea" id="RHEA:42532"/>
        <dbReference type="Rhea" id="RHEA-COMP:10101"/>
        <dbReference type="Rhea" id="RHEA-COMP:10102"/>
        <dbReference type="ChEBI" id="CHEBI:65314"/>
        <dbReference type="ChEBI" id="CHEBI:65315"/>
        <dbReference type="EC" id="5.4.99.25"/>
    </reaction>
</comment>
<comment type="similarity">
    <text evidence="1">Belongs to the pseudouridine synthase TruB family. Type 1 subfamily.</text>
</comment>
<evidence type="ECO:0000255" key="1">
    <source>
        <dbReference type="HAMAP-Rule" id="MF_01080"/>
    </source>
</evidence>
<accession>Q2KDZ7</accession>
<protein>
    <recommendedName>
        <fullName evidence="1">tRNA pseudouridine synthase B</fullName>
        <ecNumber evidence="1">5.4.99.25</ecNumber>
    </recommendedName>
    <alternativeName>
        <fullName evidence="1">tRNA pseudouridine(55) synthase</fullName>
        <shortName evidence="1">Psi55 synthase</shortName>
    </alternativeName>
    <alternativeName>
        <fullName evidence="1">tRNA pseudouridylate synthase</fullName>
    </alternativeName>
    <alternativeName>
        <fullName evidence="1">tRNA-uridine isomerase</fullName>
    </alternativeName>
</protein>